<sequence>MKVTKPNWVEHTVGEKKAKTAIYSISVHPDGTRLATGGLDHKVKIWSTLPILDVEAEKEEENPKLLCTMSSHTGSVLSVRWAHHGRFLATGSDDQVIMIWGLDPDGGGRLWGSDEINVENWKALTRLVGHVADVVDLAWSRDDTMLASVGLDSTVWIWDGLTFERLRKLDLHQGFVKGVCWDPVGNYLATQSDDKTVKIWNTEDWSLAETISKPFETSPQSTFFRRLSWSPDGAFIAASNAMNGPVFVAAVIDREGWASDISFVGHENTIQVAAFNPRLFFPEGEPKGRATASSMLALGANDFSISIWRNTLYKPLVVLKDIFGADLMDLCWSNDGYVLYGSSVDGSVCAIQFEPSEFTDLADFSATELVLREYDYKPKRAHQPLAVHSSAASITNGFGPSTTTSTHVNVLQPKKGKAKRRVDLSNGNINAGPSAGPSRQALRPPPPVDPFSGPIQGFASPSTAQASTARMFEDAHRAFGPGSGSISGTSPRAGDKRKASGSYEDPTRGVRGRGMPVQQPIQQFEVQIIRAPMVAPSPSDAGPSKAYLPYPQVQSILRAQAIGNESRSIYLEARNTSDPKGENVLCYFADGEQRWMDYLPKAALAVTVTKNFCAAACEDGSLRVYSPAGRLILNMKLSGLVYDLQGEDKMLLIITMDCQVRVINVRNGKAFSPPSSIHHLLFPGSSSFHSFDIISCTVRPNGVPVIITSEPQAFAYDASLHEWSTIASPPIAGIQPLPSGPSGPLSVVDQIVAKSAPVTTTEKSNAPWIEESYVMSQFEMKLRGTVLLDSKEEHKHWLLGYMKYLGDENFAERAGEVMKDLIGPVYHQSKPTGWEPKLLGVDKREIAAEVLDVLSKTLQGKNVASVWYDVLDKMKADEGSW</sequence>
<gene>
    <name type="primary">HIR1</name>
    <name type="ordered locus">CNBH2820</name>
</gene>
<protein>
    <recommendedName>
        <fullName>Protein HIR1</fullName>
    </recommendedName>
</protein>
<keyword id="KW-0025">Alternative splicing</keyword>
<keyword id="KW-0156">Chromatin regulator</keyword>
<keyword id="KW-0539">Nucleus</keyword>
<keyword id="KW-0677">Repeat</keyword>
<keyword id="KW-0678">Repressor</keyword>
<keyword id="KW-0804">Transcription</keyword>
<keyword id="KW-0805">Transcription regulation</keyword>
<keyword id="KW-0853">WD repeat</keyword>
<name>HIR1_CRYNB</name>
<dbReference type="EMBL" id="AAEY01000042">
    <property type="protein sequence ID" value="EAL19183.1"/>
    <property type="molecule type" value="Genomic_DNA"/>
</dbReference>
<dbReference type="RefSeq" id="XP_773830.1">
    <molecule id="P0CS39-1"/>
    <property type="nucleotide sequence ID" value="XM_768737.1"/>
</dbReference>
<dbReference type="SMR" id="P0CS39"/>
<dbReference type="EnsemblFungi" id="AAW45343">
    <property type="protein sequence ID" value="AAW45343"/>
    <property type="gene ID" value="CNI02950"/>
</dbReference>
<dbReference type="GeneID" id="4937805"/>
<dbReference type="KEGG" id="cnb:CNBH2820"/>
<dbReference type="VEuPathDB" id="FungiDB:CNBH2820"/>
<dbReference type="HOGENOM" id="CLU_004372_3_0_1"/>
<dbReference type="OrthoDB" id="1849at5206"/>
<dbReference type="GO" id="GO:0000785">
    <property type="term" value="C:chromatin"/>
    <property type="evidence" value="ECO:0007669"/>
    <property type="project" value="TreeGrafter"/>
</dbReference>
<dbReference type="GO" id="GO:0000417">
    <property type="term" value="C:HIR complex"/>
    <property type="evidence" value="ECO:0007669"/>
    <property type="project" value="TreeGrafter"/>
</dbReference>
<dbReference type="GO" id="GO:0005634">
    <property type="term" value="C:nucleus"/>
    <property type="evidence" value="ECO:0007669"/>
    <property type="project" value="UniProtKB-SubCell"/>
</dbReference>
<dbReference type="GO" id="GO:0031491">
    <property type="term" value="F:nucleosome binding"/>
    <property type="evidence" value="ECO:0007669"/>
    <property type="project" value="TreeGrafter"/>
</dbReference>
<dbReference type="GO" id="GO:0006338">
    <property type="term" value="P:chromatin remodeling"/>
    <property type="evidence" value="ECO:0007669"/>
    <property type="project" value="InterPro"/>
</dbReference>
<dbReference type="GO" id="GO:0006351">
    <property type="term" value="P:DNA-templated transcription"/>
    <property type="evidence" value="ECO:0007669"/>
    <property type="project" value="InterPro"/>
</dbReference>
<dbReference type="GO" id="GO:0006355">
    <property type="term" value="P:regulation of DNA-templated transcription"/>
    <property type="evidence" value="ECO:0007669"/>
    <property type="project" value="InterPro"/>
</dbReference>
<dbReference type="CDD" id="cd00200">
    <property type="entry name" value="WD40"/>
    <property type="match status" value="1"/>
</dbReference>
<dbReference type="FunFam" id="2.130.10.10:FF:000701">
    <property type="entry name" value="Protein HIR"/>
    <property type="match status" value="1"/>
</dbReference>
<dbReference type="FunFam" id="2.130.10.10:FF:000921">
    <property type="entry name" value="Protein HIR"/>
    <property type="match status" value="1"/>
</dbReference>
<dbReference type="Gene3D" id="2.130.10.10">
    <property type="entry name" value="YVTN repeat-like/Quinoprotein amine dehydrogenase"/>
    <property type="match status" value="2"/>
</dbReference>
<dbReference type="InterPro" id="IPR055410">
    <property type="entry name" value="CAF1B_HIR1_beta-prop"/>
</dbReference>
<dbReference type="InterPro" id="IPR031120">
    <property type="entry name" value="HIR1-like"/>
</dbReference>
<dbReference type="InterPro" id="IPR011494">
    <property type="entry name" value="HIRA-like_C"/>
</dbReference>
<dbReference type="InterPro" id="IPR015943">
    <property type="entry name" value="WD40/YVTN_repeat-like_dom_sf"/>
</dbReference>
<dbReference type="InterPro" id="IPR036322">
    <property type="entry name" value="WD40_repeat_dom_sf"/>
</dbReference>
<dbReference type="InterPro" id="IPR001680">
    <property type="entry name" value="WD40_rpt"/>
</dbReference>
<dbReference type="PANTHER" id="PTHR13831">
    <property type="entry name" value="MEMBER OF THE HIR1 FAMILY OF WD-REPEAT PROTEINS"/>
    <property type="match status" value="1"/>
</dbReference>
<dbReference type="PANTHER" id="PTHR13831:SF0">
    <property type="entry name" value="PROTEIN HIRA"/>
    <property type="match status" value="1"/>
</dbReference>
<dbReference type="Pfam" id="PF24105">
    <property type="entry name" value="Beta-prop_CAF1B_HIR1"/>
    <property type="match status" value="1"/>
</dbReference>
<dbReference type="Pfam" id="PF07569">
    <property type="entry name" value="Hira"/>
    <property type="match status" value="1"/>
</dbReference>
<dbReference type="SMART" id="SM00320">
    <property type="entry name" value="WD40"/>
    <property type="match status" value="7"/>
</dbReference>
<dbReference type="SUPFAM" id="SSF50978">
    <property type="entry name" value="WD40 repeat-like"/>
    <property type="match status" value="2"/>
</dbReference>
<dbReference type="PROSITE" id="PS00678">
    <property type="entry name" value="WD_REPEATS_1"/>
    <property type="match status" value="1"/>
</dbReference>
<dbReference type="PROSITE" id="PS50082">
    <property type="entry name" value="WD_REPEATS_2"/>
    <property type="match status" value="4"/>
</dbReference>
<dbReference type="PROSITE" id="PS50294">
    <property type="entry name" value="WD_REPEATS_REGION"/>
    <property type="match status" value="1"/>
</dbReference>
<organism>
    <name type="scientific">Cryptococcus neoformans var. neoformans serotype D (strain B-3501A)</name>
    <name type="common">Filobasidiella neoformans</name>
    <dbReference type="NCBI Taxonomy" id="283643"/>
    <lineage>
        <taxon>Eukaryota</taxon>
        <taxon>Fungi</taxon>
        <taxon>Dikarya</taxon>
        <taxon>Basidiomycota</taxon>
        <taxon>Agaricomycotina</taxon>
        <taxon>Tremellomycetes</taxon>
        <taxon>Tremellales</taxon>
        <taxon>Cryptococcaceae</taxon>
        <taxon>Cryptococcus</taxon>
        <taxon>Cryptococcus neoformans species complex</taxon>
    </lineage>
</organism>
<reference key="1">
    <citation type="journal article" date="2005" name="Science">
        <title>The genome of the basidiomycetous yeast and human pathogen Cryptococcus neoformans.</title>
        <authorList>
            <person name="Loftus B.J."/>
            <person name="Fung E."/>
            <person name="Roncaglia P."/>
            <person name="Rowley D."/>
            <person name="Amedeo P."/>
            <person name="Bruno D."/>
            <person name="Vamathevan J."/>
            <person name="Miranda M."/>
            <person name="Anderson I.J."/>
            <person name="Fraser J.A."/>
            <person name="Allen J.E."/>
            <person name="Bosdet I.E."/>
            <person name="Brent M.R."/>
            <person name="Chiu R."/>
            <person name="Doering T.L."/>
            <person name="Donlin M.J."/>
            <person name="D'Souza C.A."/>
            <person name="Fox D.S."/>
            <person name="Grinberg V."/>
            <person name="Fu J."/>
            <person name="Fukushima M."/>
            <person name="Haas B.J."/>
            <person name="Huang J.C."/>
            <person name="Janbon G."/>
            <person name="Jones S.J.M."/>
            <person name="Koo H.L."/>
            <person name="Krzywinski M.I."/>
            <person name="Kwon-Chung K.J."/>
            <person name="Lengeler K.B."/>
            <person name="Maiti R."/>
            <person name="Marra M.A."/>
            <person name="Marra R.E."/>
            <person name="Mathewson C.A."/>
            <person name="Mitchell T.G."/>
            <person name="Pertea M."/>
            <person name="Riggs F.R."/>
            <person name="Salzberg S.L."/>
            <person name="Schein J.E."/>
            <person name="Shvartsbeyn A."/>
            <person name="Shin H."/>
            <person name="Shumway M."/>
            <person name="Specht C.A."/>
            <person name="Suh B.B."/>
            <person name="Tenney A."/>
            <person name="Utterback T.R."/>
            <person name="Wickes B.L."/>
            <person name="Wortman J.R."/>
            <person name="Wye N.H."/>
            <person name="Kronstad J.W."/>
            <person name="Lodge J.K."/>
            <person name="Heitman J."/>
            <person name="Davis R.W."/>
            <person name="Fraser C.M."/>
            <person name="Hyman R.W."/>
        </authorList>
    </citation>
    <scope>NUCLEOTIDE SEQUENCE [LARGE SCALE GENOMIC DNA]</scope>
    <source>
        <strain>B-3501A</strain>
    </source>
</reference>
<evidence type="ECO:0000250" key="1"/>
<evidence type="ECO:0000256" key="2">
    <source>
        <dbReference type="SAM" id="MobiDB-lite"/>
    </source>
</evidence>
<evidence type="ECO:0000305" key="3"/>
<feature type="chain" id="PRO_0000410332" description="Protein HIR1">
    <location>
        <begin position="1"/>
        <end position="881"/>
    </location>
</feature>
<feature type="repeat" description="WD 1">
    <location>
        <begin position="17"/>
        <end position="56"/>
    </location>
</feature>
<feature type="repeat" description="WD 2">
    <location>
        <begin position="71"/>
        <end position="110"/>
    </location>
</feature>
<feature type="repeat" description="WD 3">
    <location>
        <begin position="129"/>
        <end position="168"/>
    </location>
</feature>
<feature type="repeat" description="WD 4">
    <location>
        <begin position="171"/>
        <end position="210"/>
    </location>
</feature>
<feature type="repeat" description="WD 5">
    <location>
        <begin position="219"/>
        <end position="262"/>
    </location>
</feature>
<feature type="repeat" description="WD 6">
    <location>
        <begin position="265"/>
        <end position="318"/>
    </location>
</feature>
<feature type="repeat" description="WD 7">
    <location>
        <begin position="322"/>
        <end position="363"/>
    </location>
</feature>
<feature type="repeat" description="WD 8">
    <location>
        <begin position="588"/>
        <end position="635"/>
    </location>
</feature>
<feature type="repeat" description="WD 9">
    <location>
        <begin position="688"/>
        <end position="733"/>
    </location>
</feature>
<feature type="region of interest" description="Disordered" evidence="2">
    <location>
        <begin position="398"/>
        <end position="514"/>
    </location>
</feature>
<feature type="compositionally biased region" description="Polar residues" evidence="2">
    <location>
        <begin position="398"/>
        <end position="409"/>
    </location>
</feature>
<feature type="compositionally biased region" description="Polar residues" evidence="2">
    <location>
        <begin position="459"/>
        <end position="468"/>
    </location>
</feature>
<feature type="splice variant" id="VSP_041431" description="In isoform 2." evidence="3">
    <original>H</original>
    <variation>Q</variation>
    <location>
        <position position="827"/>
    </location>
</feature>
<feature type="splice variant" id="VSP_041432" description="In isoform 2." evidence="3">
    <location>
        <begin position="828"/>
        <end position="881"/>
    </location>
</feature>
<proteinExistence type="inferred from homology"/>
<accession>P0CS39</accession>
<accession>Q55N02</accession>
<accession>Q5KBD1</accession>
<accession>Q5KBD2</accession>
<comment type="function">
    <text evidence="1">Required for replication-independent chromatin assembly and for the periodic repression of histone gene transcription during the cell cycle.</text>
</comment>
<comment type="subcellular location">
    <subcellularLocation>
        <location evidence="1">Nucleus</location>
    </subcellularLocation>
</comment>
<comment type="alternative products">
    <event type="alternative splicing"/>
    <isoform>
        <id>P0CS39-1</id>
        <name>1</name>
        <sequence type="displayed"/>
    </isoform>
    <isoform>
        <id>P0CS39-2</id>
        <name>2</name>
        <sequence type="described" ref="VSP_041431 VSP_041432"/>
    </isoform>
</comment>
<comment type="similarity">
    <text evidence="3">Belongs to the WD repeat HIR1 family.</text>
</comment>